<sequence length="83" mass="8958">MSSGGLLLLLGLLTLWEVLTPVSSKDRPKFCELPADIGPCEDFTGAFHYSPREHECIEFIYGGCEGNANNFNTLEGCESACAA</sequence>
<keyword id="KW-1015">Disulfide bond</keyword>
<keyword id="KW-0646">Protease inhibitor</keyword>
<keyword id="KW-0964">Secreted</keyword>
<keyword id="KW-0722">Serine protease inhibitor</keyword>
<keyword id="KW-0732">Signal</keyword>
<proteinExistence type="evidence at transcript level"/>
<dbReference type="EMBL" id="EF990736">
    <property type="protein sequence ID" value="ABV64390.1"/>
    <property type="molecule type" value="mRNA"/>
</dbReference>
<dbReference type="SMR" id="B5KL28"/>
<dbReference type="MEROPS" id="I02.052"/>
<dbReference type="GO" id="GO:0005576">
    <property type="term" value="C:extracellular region"/>
    <property type="evidence" value="ECO:0007669"/>
    <property type="project" value="UniProtKB-SubCell"/>
</dbReference>
<dbReference type="GO" id="GO:0004867">
    <property type="term" value="F:serine-type endopeptidase inhibitor activity"/>
    <property type="evidence" value="ECO:0007669"/>
    <property type="project" value="UniProtKB-KW"/>
</dbReference>
<dbReference type="CDD" id="cd22594">
    <property type="entry name" value="Kunitz_textilinin-like"/>
    <property type="match status" value="1"/>
</dbReference>
<dbReference type="FunFam" id="4.10.410.10:FF:000020">
    <property type="entry name" value="Collagen, type VI, alpha 3"/>
    <property type="match status" value="1"/>
</dbReference>
<dbReference type="Gene3D" id="4.10.410.10">
    <property type="entry name" value="Pancreatic trypsin inhibitor Kunitz domain"/>
    <property type="match status" value="1"/>
</dbReference>
<dbReference type="InterPro" id="IPR002223">
    <property type="entry name" value="Kunitz_BPTI"/>
</dbReference>
<dbReference type="InterPro" id="IPR036880">
    <property type="entry name" value="Kunitz_BPTI_sf"/>
</dbReference>
<dbReference type="InterPro" id="IPR020901">
    <property type="entry name" value="Prtase_inh_Kunz-CS"/>
</dbReference>
<dbReference type="InterPro" id="IPR050098">
    <property type="entry name" value="TFPI/VKTCI-like"/>
</dbReference>
<dbReference type="PANTHER" id="PTHR10083">
    <property type="entry name" value="KUNITZ-TYPE PROTEASE INHIBITOR-RELATED"/>
    <property type="match status" value="1"/>
</dbReference>
<dbReference type="Pfam" id="PF00014">
    <property type="entry name" value="Kunitz_BPTI"/>
    <property type="match status" value="1"/>
</dbReference>
<dbReference type="PRINTS" id="PR00759">
    <property type="entry name" value="BASICPTASE"/>
</dbReference>
<dbReference type="SMART" id="SM00131">
    <property type="entry name" value="KU"/>
    <property type="match status" value="1"/>
</dbReference>
<dbReference type="SUPFAM" id="SSF57362">
    <property type="entry name" value="BPTI-like"/>
    <property type="match status" value="1"/>
</dbReference>
<dbReference type="PROSITE" id="PS00280">
    <property type="entry name" value="BPTI_KUNITZ_1"/>
    <property type="match status" value="1"/>
</dbReference>
<dbReference type="PROSITE" id="PS50279">
    <property type="entry name" value="BPTI_KUNITZ_2"/>
    <property type="match status" value="1"/>
</dbReference>
<organism>
    <name type="scientific">Oxyuranus microlepidotus</name>
    <name type="common">Inland taipan</name>
    <name type="synonym">Diemenia microlepidota</name>
    <dbReference type="NCBI Taxonomy" id="111177"/>
    <lineage>
        <taxon>Eukaryota</taxon>
        <taxon>Metazoa</taxon>
        <taxon>Chordata</taxon>
        <taxon>Craniata</taxon>
        <taxon>Vertebrata</taxon>
        <taxon>Euteleostomi</taxon>
        <taxon>Lepidosauria</taxon>
        <taxon>Squamata</taxon>
        <taxon>Bifurcata</taxon>
        <taxon>Unidentata</taxon>
        <taxon>Episquamata</taxon>
        <taxon>Toxicofera</taxon>
        <taxon>Serpentes</taxon>
        <taxon>Colubroidea</taxon>
        <taxon>Elapidae</taxon>
        <taxon>Hydrophiinae</taxon>
        <taxon>Oxyuranus</taxon>
    </lineage>
</organism>
<accession>B5KL28</accession>
<name>VKT4_OXYMI</name>
<comment type="function">
    <text evidence="1">Serine protease inhibitor.</text>
</comment>
<comment type="subcellular location">
    <subcellularLocation>
        <location evidence="1">Secreted</location>
    </subcellularLocation>
</comment>
<comment type="tissue specificity">
    <text>Expressed by the venom gland.</text>
</comment>
<comment type="similarity">
    <text evidence="4">Belongs to the venom Kunitz-type family.</text>
</comment>
<feature type="signal peptide" evidence="2">
    <location>
        <begin position="1"/>
        <end position="24"/>
    </location>
</feature>
<feature type="chain" id="PRO_5000395587" description="Kunitz-type serine protease inhibitor microlepidin-4">
    <location>
        <begin position="25"/>
        <end position="83"/>
    </location>
</feature>
<feature type="domain" description="BPTI/Kunitz inhibitor" evidence="3">
    <location>
        <begin position="31"/>
        <end position="81"/>
    </location>
</feature>
<feature type="disulfide bond" evidence="3">
    <location>
        <begin position="31"/>
        <end position="81"/>
    </location>
</feature>
<feature type="disulfide bond" evidence="3">
    <location>
        <begin position="40"/>
        <end position="64"/>
    </location>
</feature>
<feature type="disulfide bond" evidence="3">
    <location>
        <begin position="56"/>
        <end position="77"/>
    </location>
</feature>
<reference key="1">
    <citation type="submission" date="2007-06" db="EMBL/GenBank/DDBJ databases">
        <title>Identification of Kunitz-type serine protease inhibitors from the venom glands of Australian elapid snakes.</title>
        <authorList>
            <person name="St Pierre L."/>
            <person name="Earl S."/>
        </authorList>
    </citation>
    <scope>NUCLEOTIDE SEQUENCE [MRNA]</scope>
</reference>
<evidence type="ECO:0000250" key="1"/>
<evidence type="ECO:0000255" key="2"/>
<evidence type="ECO:0000255" key="3">
    <source>
        <dbReference type="PROSITE-ProRule" id="PRU00031"/>
    </source>
</evidence>
<evidence type="ECO:0000305" key="4"/>
<protein>
    <recommendedName>
        <fullName>Kunitz-type serine protease inhibitor microlepidin-4</fullName>
    </recommendedName>
</protein>